<name>SEY1_LEIBR</name>
<gene>
    <name type="ORF">LbrM32_V2.0440</name>
</gene>
<reference key="1">
    <citation type="journal article" date="2007" name="Nat. Genet.">
        <title>Comparative genomic analysis of three Leishmania species that cause diverse human disease.</title>
        <authorList>
            <person name="Peacock C.S."/>
            <person name="Seeger K."/>
            <person name="Harris D."/>
            <person name="Murphy L."/>
            <person name="Ruiz J.C."/>
            <person name="Quail M.A."/>
            <person name="Peters N."/>
            <person name="Adlem E."/>
            <person name="Tivey A."/>
            <person name="Aslett M."/>
            <person name="Kerhornou A."/>
            <person name="Ivens A."/>
            <person name="Fraser A."/>
            <person name="Rajandream M.-A."/>
            <person name="Carver T."/>
            <person name="Norbertczak H."/>
            <person name="Chillingworth T."/>
            <person name="Hance Z."/>
            <person name="Jagels K."/>
            <person name="Moule S."/>
            <person name="Ormond D."/>
            <person name="Rutter S."/>
            <person name="Sqaures R."/>
            <person name="Whitehead S."/>
            <person name="Rabbinowitsch E."/>
            <person name="Arrowsmith C."/>
            <person name="White B."/>
            <person name="Thurston S."/>
            <person name="Bringaud F."/>
            <person name="Baldauf S.L."/>
            <person name="Faulconbridge A."/>
            <person name="Jeffares D."/>
            <person name="Depledge D.P."/>
            <person name="Oyola S.O."/>
            <person name="Hilley J.D."/>
            <person name="Brito L.O."/>
            <person name="Tosi L.R.O."/>
            <person name="Barrell B."/>
            <person name="Cruz A.K."/>
            <person name="Mottram J.C."/>
            <person name="Smith D.F."/>
            <person name="Berriman M."/>
        </authorList>
    </citation>
    <scope>NUCLEOTIDE SEQUENCE [LARGE SCALE GENOMIC DNA]</scope>
    <source>
        <strain>MHOM/BR/75/M2904</strain>
    </source>
</reference>
<accession>A4HK17</accession>
<sequence>MNLHLVDSDGHLEAEKKLTEYLTSIVAPSVSPSRGSATADGDYGNGALEAVGLNYHVVGVFGGQSSGKSTLLNHLFGTHFQMLDETVRRGQTTKGAFMALANTALAGLEASDVAVVAPRLAPSAADRSSRLNHAVAAAVTNNTTGGAPPTGSPLLVLDFEGTDGLERGEDQCFERQLSLFGLSIVDTLIINMWAVDVGRFNAANLSLLRTIFEVNLQLFSHSNYEAEEKPTLLVVLRDFTEDDPLPSLTTVRKSFDTIWESITRPAQFEDTSIDALFHLKYYVMPHYRLQKEEFMASVETLRRWFGDSRCSDYLFSYHSMFRGVPLDGLPAYLTNCWAAIRTSKDLDIPTQREMLAQHRCKEAKEQELMTYRDFARGYEDRLLRGEMLLRLSEVLDEEMETRLTAFYRQTKLYSSAVVGQYANELETELVDATMQVLNRLSKAIATEVLSNVESRVLNSVEESLRQLLKSAQTLPFSAGEDSSTTEPAEAHDADEDAARLLGAQRMDSAACQRLVRGFWRTLSIQVKEVVAEVAAMPPRAHLYGRYAVLIVQDPTTRLNVLNIVTDAFFQKVKSRLVSMANSACDTMHSGFERSLTYNSDGTVRFFATTRGLQKAVPAAVQAGLVVLGSLFYFRLKLVSAAVSDDDDLDTGATAALPQSRSARRVRHNRCHIVFDDNDAEAAFYLSYSTLDTAPKYPCDVPVPTLDCDREEVGVAADCVLLSQQATVRAYELYKQKCDFTTQLQLRAAEAGNQRLPAWVIPALFILGWNELLYVLTSPALLVLVVVICAVFFRQFFVSQWHAFEETGPASVVIPVRTVVHALSALVRSLLGDGQGSCPERAARNGSDVVASGEREMAHVKVTSTHADPAPSNTTVPTAQATMRHRTTHKLD</sequence>
<evidence type="ECO:0000255" key="1">
    <source>
        <dbReference type="HAMAP-Rule" id="MF_03109"/>
    </source>
</evidence>
<evidence type="ECO:0000255" key="2">
    <source>
        <dbReference type="PROSITE-ProRule" id="PRU01052"/>
    </source>
</evidence>
<evidence type="ECO:0000256" key="3">
    <source>
        <dbReference type="SAM" id="MobiDB-lite"/>
    </source>
</evidence>
<comment type="function">
    <text evidence="1">Probable GTP-binding protein that may be involved in cell development.</text>
</comment>
<comment type="subcellular location">
    <subcellularLocation>
        <location evidence="1">Endoplasmic reticulum membrane</location>
        <topology evidence="1">Multi-pass membrane protein</topology>
    </subcellularLocation>
</comment>
<comment type="similarity">
    <text evidence="2">Belongs to the TRAFAC class dynamin-like GTPase superfamily. GB1/RHD3 GTPase family. RHD3 subfamily.</text>
</comment>
<organism>
    <name type="scientific">Leishmania braziliensis</name>
    <dbReference type="NCBI Taxonomy" id="5660"/>
    <lineage>
        <taxon>Eukaryota</taxon>
        <taxon>Discoba</taxon>
        <taxon>Euglenozoa</taxon>
        <taxon>Kinetoplastea</taxon>
        <taxon>Metakinetoplastina</taxon>
        <taxon>Trypanosomatida</taxon>
        <taxon>Trypanosomatidae</taxon>
        <taxon>Leishmaniinae</taxon>
        <taxon>Leishmania</taxon>
        <taxon>Leishmania braziliensis species complex</taxon>
    </lineage>
</organism>
<proteinExistence type="inferred from homology"/>
<protein>
    <recommendedName>
        <fullName evidence="1">Protein SEY1 homolog</fullName>
        <ecNumber evidence="1">3.6.5.-</ecNumber>
    </recommendedName>
</protein>
<feature type="chain" id="PRO_0000384949" description="Protein SEY1 homolog">
    <location>
        <begin position="1"/>
        <end position="891"/>
    </location>
</feature>
<feature type="topological domain" description="Cytoplasmic" evidence="1">
    <location>
        <begin position="1"/>
        <end position="754"/>
    </location>
</feature>
<feature type="transmembrane region" description="Helical" evidence="1">
    <location>
        <begin position="755"/>
        <end position="775"/>
    </location>
</feature>
<feature type="topological domain" description="Lumenal" evidence="1">
    <location>
        <begin position="776"/>
        <end position="778"/>
    </location>
</feature>
<feature type="transmembrane region" description="Helical" evidence="1">
    <location>
        <begin position="779"/>
        <end position="799"/>
    </location>
</feature>
<feature type="topological domain" description="Cytoplasmic" evidence="1">
    <location>
        <begin position="800"/>
        <end position="891"/>
    </location>
</feature>
<feature type="domain" description="GB1/RHD3-type G" evidence="2">
    <location>
        <begin position="52"/>
        <end position="318"/>
    </location>
</feature>
<feature type="region of interest" description="Disordered" evidence="3">
    <location>
        <begin position="863"/>
        <end position="891"/>
    </location>
</feature>
<feature type="compositionally biased region" description="Polar residues" evidence="3">
    <location>
        <begin position="863"/>
        <end position="880"/>
    </location>
</feature>
<feature type="compositionally biased region" description="Basic residues" evidence="3">
    <location>
        <begin position="882"/>
        <end position="891"/>
    </location>
</feature>
<feature type="binding site" evidence="1">
    <location>
        <begin position="62"/>
        <end position="69"/>
    </location>
    <ligand>
        <name>GTP</name>
        <dbReference type="ChEBI" id="CHEBI:37565"/>
    </ligand>
</feature>
<keyword id="KW-0256">Endoplasmic reticulum</keyword>
<keyword id="KW-0342">GTP-binding</keyword>
<keyword id="KW-0378">Hydrolase</keyword>
<keyword id="KW-0472">Membrane</keyword>
<keyword id="KW-0547">Nucleotide-binding</keyword>
<keyword id="KW-1185">Reference proteome</keyword>
<keyword id="KW-0812">Transmembrane</keyword>
<keyword id="KW-1133">Transmembrane helix</keyword>
<dbReference type="EC" id="3.6.5.-" evidence="1"/>
<dbReference type="EMBL" id="FR799007">
    <property type="protein sequence ID" value="CAM42839.2"/>
    <property type="molecule type" value="Genomic_DNA"/>
</dbReference>
<dbReference type="RefSeq" id="XP_001567402.2">
    <property type="nucleotide sequence ID" value="XM_001567352.2"/>
</dbReference>
<dbReference type="SMR" id="A4HK17"/>
<dbReference type="STRING" id="5660.A4HK17"/>
<dbReference type="KEGG" id="lbz:LBRM_32_0440"/>
<dbReference type="VEuPathDB" id="TriTrypDB:LbrM.32.0440"/>
<dbReference type="InParanoid" id="A4HK17"/>
<dbReference type="Proteomes" id="UP000007258">
    <property type="component" value="Chromosome 32"/>
</dbReference>
<dbReference type="GO" id="GO:0005789">
    <property type="term" value="C:endoplasmic reticulum membrane"/>
    <property type="evidence" value="ECO:0007669"/>
    <property type="project" value="UniProtKB-SubCell"/>
</dbReference>
<dbReference type="GO" id="GO:0005525">
    <property type="term" value="F:GTP binding"/>
    <property type="evidence" value="ECO:0007669"/>
    <property type="project" value="UniProtKB-UniRule"/>
</dbReference>
<dbReference type="GO" id="GO:0003924">
    <property type="term" value="F:GTPase activity"/>
    <property type="evidence" value="ECO:0007669"/>
    <property type="project" value="UniProtKB-UniRule"/>
</dbReference>
<dbReference type="GO" id="GO:0016320">
    <property type="term" value="P:endoplasmic reticulum membrane fusion"/>
    <property type="evidence" value="ECO:0007669"/>
    <property type="project" value="TreeGrafter"/>
</dbReference>
<dbReference type="CDD" id="cd01851">
    <property type="entry name" value="GBP"/>
    <property type="match status" value="1"/>
</dbReference>
<dbReference type="Gene3D" id="3.40.50.300">
    <property type="entry name" value="P-loop containing nucleotide triphosphate hydrolases"/>
    <property type="match status" value="1"/>
</dbReference>
<dbReference type="HAMAP" id="MF_03109">
    <property type="entry name" value="Sey1"/>
    <property type="match status" value="1"/>
</dbReference>
<dbReference type="InterPro" id="IPR030386">
    <property type="entry name" value="G_GB1_RHD3_dom"/>
</dbReference>
<dbReference type="InterPro" id="IPR027417">
    <property type="entry name" value="P-loop_NTPase"/>
</dbReference>
<dbReference type="InterPro" id="IPR008803">
    <property type="entry name" value="RHD3/Sey1"/>
</dbReference>
<dbReference type="InterPro" id="IPR046758">
    <property type="entry name" value="Sey1/RHD3-like_3HB"/>
</dbReference>
<dbReference type="PANTHER" id="PTHR45923">
    <property type="entry name" value="PROTEIN SEY1"/>
    <property type="match status" value="1"/>
</dbReference>
<dbReference type="PANTHER" id="PTHR45923:SF2">
    <property type="entry name" value="PROTEIN SEY1"/>
    <property type="match status" value="1"/>
</dbReference>
<dbReference type="Pfam" id="PF05879">
    <property type="entry name" value="RHD3_GTPase"/>
    <property type="match status" value="1"/>
</dbReference>
<dbReference type="Pfam" id="PF20428">
    <property type="entry name" value="Sey1_3HB"/>
    <property type="match status" value="1"/>
</dbReference>
<dbReference type="SUPFAM" id="SSF52540">
    <property type="entry name" value="P-loop containing nucleoside triphosphate hydrolases"/>
    <property type="match status" value="1"/>
</dbReference>
<dbReference type="PROSITE" id="PS51715">
    <property type="entry name" value="G_GB1_RHD3"/>
    <property type="match status" value="1"/>
</dbReference>